<comment type="function">
    <text evidence="1">Pyrophosphatase that catalyzes the hydrolysis of nucleoside triphosphates to their monophosphate derivatives, with a high preference for the non-canonical purine nucleotides XTP (xanthosine triphosphate), dITP (deoxyinosine triphosphate) and ITP. Seems to function as a house-cleaning enzyme that removes non-canonical purine nucleotides from the nucleotide pool, thus preventing their incorporation into DNA/RNA and avoiding chromosomal lesions.</text>
</comment>
<comment type="catalytic activity">
    <reaction evidence="1">
        <text>XTP + H2O = XMP + diphosphate + H(+)</text>
        <dbReference type="Rhea" id="RHEA:28610"/>
        <dbReference type="ChEBI" id="CHEBI:15377"/>
        <dbReference type="ChEBI" id="CHEBI:15378"/>
        <dbReference type="ChEBI" id="CHEBI:33019"/>
        <dbReference type="ChEBI" id="CHEBI:57464"/>
        <dbReference type="ChEBI" id="CHEBI:61314"/>
        <dbReference type="EC" id="3.6.1.66"/>
    </reaction>
</comment>
<comment type="catalytic activity">
    <reaction evidence="1">
        <text>dITP + H2O = dIMP + diphosphate + H(+)</text>
        <dbReference type="Rhea" id="RHEA:28342"/>
        <dbReference type="ChEBI" id="CHEBI:15377"/>
        <dbReference type="ChEBI" id="CHEBI:15378"/>
        <dbReference type="ChEBI" id="CHEBI:33019"/>
        <dbReference type="ChEBI" id="CHEBI:61194"/>
        <dbReference type="ChEBI" id="CHEBI:61382"/>
        <dbReference type="EC" id="3.6.1.66"/>
    </reaction>
</comment>
<comment type="catalytic activity">
    <reaction evidence="1">
        <text>ITP + H2O = IMP + diphosphate + H(+)</text>
        <dbReference type="Rhea" id="RHEA:29399"/>
        <dbReference type="ChEBI" id="CHEBI:15377"/>
        <dbReference type="ChEBI" id="CHEBI:15378"/>
        <dbReference type="ChEBI" id="CHEBI:33019"/>
        <dbReference type="ChEBI" id="CHEBI:58053"/>
        <dbReference type="ChEBI" id="CHEBI:61402"/>
        <dbReference type="EC" id="3.6.1.66"/>
    </reaction>
</comment>
<comment type="cofactor">
    <cofactor evidence="1">
        <name>Mg(2+)</name>
        <dbReference type="ChEBI" id="CHEBI:18420"/>
    </cofactor>
    <text evidence="1">Binds 1 Mg(2+) ion per subunit.</text>
</comment>
<comment type="subunit">
    <text evidence="1">Homodimer.</text>
</comment>
<comment type="similarity">
    <text evidence="1">Belongs to the HAM1 NTPase family.</text>
</comment>
<accession>Q8CSY5</accession>
<feature type="chain" id="PRO_0000178233" description="dITP/XTP pyrophosphatase">
    <location>
        <begin position="1"/>
        <end position="195"/>
    </location>
</feature>
<feature type="active site" description="Proton acceptor" evidence="1">
    <location>
        <position position="68"/>
    </location>
</feature>
<feature type="binding site" evidence="1">
    <location>
        <begin position="8"/>
        <end position="13"/>
    </location>
    <ligand>
        <name>substrate</name>
    </ligand>
</feature>
<feature type="binding site" evidence="1">
    <location>
        <position position="39"/>
    </location>
    <ligand>
        <name>Mg(2+)</name>
        <dbReference type="ChEBI" id="CHEBI:18420"/>
    </ligand>
</feature>
<feature type="binding site" evidence="1">
    <location>
        <position position="68"/>
    </location>
    <ligand>
        <name>Mg(2+)</name>
        <dbReference type="ChEBI" id="CHEBI:18420"/>
    </ligand>
</feature>
<feature type="binding site" evidence="1">
    <location>
        <position position="69"/>
    </location>
    <ligand>
        <name>substrate</name>
    </ligand>
</feature>
<feature type="binding site" evidence="1">
    <location>
        <begin position="149"/>
        <end position="152"/>
    </location>
    <ligand>
        <name>substrate</name>
    </ligand>
</feature>
<feature type="binding site" evidence="1">
    <location>
        <position position="172"/>
    </location>
    <ligand>
        <name>substrate</name>
    </ligand>
</feature>
<feature type="binding site" evidence="1">
    <location>
        <begin position="177"/>
        <end position="178"/>
    </location>
    <ligand>
        <name>substrate</name>
    </ligand>
</feature>
<name>IXTPA_STAES</name>
<organism>
    <name type="scientific">Staphylococcus epidermidis (strain ATCC 12228 / FDA PCI 1200)</name>
    <dbReference type="NCBI Taxonomy" id="176280"/>
    <lineage>
        <taxon>Bacteria</taxon>
        <taxon>Bacillati</taxon>
        <taxon>Bacillota</taxon>
        <taxon>Bacilli</taxon>
        <taxon>Bacillales</taxon>
        <taxon>Staphylococcaceae</taxon>
        <taxon>Staphylococcus</taxon>
    </lineage>
</organism>
<evidence type="ECO:0000255" key="1">
    <source>
        <dbReference type="HAMAP-Rule" id="MF_01405"/>
    </source>
</evidence>
<sequence length="195" mass="21646">MEDIVIATNNQGKINDFKAIFKNQHVIGISELIEDFDVEETGATFEENARLKSEAAAHALNKRVIADDSGLEVFALNGEPGVYSARYAGLGKNDEDNIEKLLTNLEDVQDRRAQFVCVISMSAPNEKTKTFKGTVSGVITTERHGKNGFGYDPIFFVPELNKTMAEITNDEKGKISHRGNAIRLLKEYLEGEQHV</sequence>
<dbReference type="EC" id="3.6.1.66" evidence="1"/>
<dbReference type="EMBL" id="AE015929">
    <property type="protein sequence ID" value="AAO04441.1"/>
    <property type="molecule type" value="Genomic_DNA"/>
</dbReference>
<dbReference type="RefSeq" id="NP_764399.1">
    <property type="nucleotide sequence ID" value="NC_004461.1"/>
</dbReference>
<dbReference type="RefSeq" id="WP_001830169.1">
    <property type="nucleotide sequence ID" value="NZ_WBME01000035.1"/>
</dbReference>
<dbReference type="SMR" id="Q8CSY5"/>
<dbReference type="KEGG" id="sep:SE_0844"/>
<dbReference type="PATRIC" id="fig|176280.10.peg.817"/>
<dbReference type="eggNOG" id="COG0127">
    <property type="taxonomic scope" value="Bacteria"/>
</dbReference>
<dbReference type="HOGENOM" id="CLU_082080_0_2_9"/>
<dbReference type="OrthoDB" id="9807456at2"/>
<dbReference type="Proteomes" id="UP000001411">
    <property type="component" value="Chromosome"/>
</dbReference>
<dbReference type="GO" id="GO:0005829">
    <property type="term" value="C:cytosol"/>
    <property type="evidence" value="ECO:0007669"/>
    <property type="project" value="TreeGrafter"/>
</dbReference>
<dbReference type="GO" id="GO:0035870">
    <property type="term" value="F:dITP diphosphatase activity"/>
    <property type="evidence" value="ECO:0007669"/>
    <property type="project" value="RHEA"/>
</dbReference>
<dbReference type="GO" id="GO:0036220">
    <property type="term" value="F:ITP diphosphatase activity"/>
    <property type="evidence" value="ECO:0007669"/>
    <property type="project" value="UniProtKB-EC"/>
</dbReference>
<dbReference type="GO" id="GO:0046872">
    <property type="term" value="F:metal ion binding"/>
    <property type="evidence" value="ECO:0007669"/>
    <property type="project" value="UniProtKB-KW"/>
</dbReference>
<dbReference type="GO" id="GO:0000166">
    <property type="term" value="F:nucleotide binding"/>
    <property type="evidence" value="ECO:0007669"/>
    <property type="project" value="UniProtKB-KW"/>
</dbReference>
<dbReference type="GO" id="GO:0017111">
    <property type="term" value="F:ribonucleoside triphosphate phosphatase activity"/>
    <property type="evidence" value="ECO:0007669"/>
    <property type="project" value="InterPro"/>
</dbReference>
<dbReference type="GO" id="GO:0036222">
    <property type="term" value="F:XTP diphosphatase activity"/>
    <property type="evidence" value="ECO:0007669"/>
    <property type="project" value="RHEA"/>
</dbReference>
<dbReference type="GO" id="GO:0009117">
    <property type="term" value="P:nucleotide metabolic process"/>
    <property type="evidence" value="ECO:0007669"/>
    <property type="project" value="UniProtKB-KW"/>
</dbReference>
<dbReference type="GO" id="GO:0009146">
    <property type="term" value="P:purine nucleoside triphosphate catabolic process"/>
    <property type="evidence" value="ECO:0007669"/>
    <property type="project" value="UniProtKB-UniRule"/>
</dbReference>
<dbReference type="CDD" id="cd00515">
    <property type="entry name" value="HAM1"/>
    <property type="match status" value="1"/>
</dbReference>
<dbReference type="FunFam" id="3.90.950.10:FF:000001">
    <property type="entry name" value="dITP/XTP pyrophosphatase"/>
    <property type="match status" value="1"/>
</dbReference>
<dbReference type="Gene3D" id="3.90.950.10">
    <property type="match status" value="1"/>
</dbReference>
<dbReference type="HAMAP" id="MF_01405">
    <property type="entry name" value="Non_canon_purine_NTPase"/>
    <property type="match status" value="1"/>
</dbReference>
<dbReference type="InterPro" id="IPR020922">
    <property type="entry name" value="dITP/XTP_pyrophosphatase"/>
</dbReference>
<dbReference type="InterPro" id="IPR029001">
    <property type="entry name" value="ITPase-like_fam"/>
</dbReference>
<dbReference type="InterPro" id="IPR002637">
    <property type="entry name" value="RdgB/HAM1"/>
</dbReference>
<dbReference type="NCBIfam" id="NF011397">
    <property type="entry name" value="PRK14822.1"/>
    <property type="match status" value="1"/>
</dbReference>
<dbReference type="NCBIfam" id="TIGR00042">
    <property type="entry name" value="RdgB/HAM1 family non-canonical purine NTP pyrophosphatase"/>
    <property type="match status" value="1"/>
</dbReference>
<dbReference type="PANTHER" id="PTHR11067:SF9">
    <property type="entry name" value="INOSINE TRIPHOSPHATE PYROPHOSPHATASE"/>
    <property type="match status" value="1"/>
</dbReference>
<dbReference type="PANTHER" id="PTHR11067">
    <property type="entry name" value="INOSINE TRIPHOSPHATE PYROPHOSPHATASE/HAM1 PROTEIN"/>
    <property type="match status" value="1"/>
</dbReference>
<dbReference type="Pfam" id="PF01725">
    <property type="entry name" value="Ham1p_like"/>
    <property type="match status" value="1"/>
</dbReference>
<dbReference type="SUPFAM" id="SSF52972">
    <property type="entry name" value="ITPase-like"/>
    <property type="match status" value="1"/>
</dbReference>
<keyword id="KW-0378">Hydrolase</keyword>
<keyword id="KW-0460">Magnesium</keyword>
<keyword id="KW-0479">Metal-binding</keyword>
<keyword id="KW-0546">Nucleotide metabolism</keyword>
<keyword id="KW-0547">Nucleotide-binding</keyword>
<gene>
    <name type="ordered locus">SE_0844</name>
</gene>
<proteinExistence type="inferred from homology"/>
<protein>
    <recommendedName>
        <fullName evidence="1">dITP/XTP pyrophosphatase</fullName>
        <ecNumber evidence="1">3.6.1.66</ecNumber>
    </recommendedName>
    <alternativeName>
        <fullName evidence="1">Non-canonical purine NTP pyrophosphatase</fullName>
    </alternativeName>
    <alternativeName>
        <fullName evidence="1">Non-standard purine NTP pyrophosphatase</fullName>
    </alternativeName>
    <alternativeName>
        <fullName evidence="1">Nucleoside-triphosphate diphosphatase</fullName>
    </alternativeName>
    <alternativeName>
        <fullName evidence="1">Nucleoside-triphosphate pyrophosphatase</fullName>
        <shortName evidence="1">NTPase</shortName>
    </alternativeName>
</protein>
<reference key="1">
    <citation type="journal article" date="2003" name="Mol. Microbiol.">
        <title>Genome-based analysis of virulence genes in a non-biofilm-forming Staphylococcus epidermidis strain (ATCC 12228).</title>
        <authorList>
            <person name="Zhang Y.-Q."/>
            <person name="Ren S.-X."/>
            <person name="Li H.-L."/>
            <person name="Wang Y.-X."/>
            <person name="Fu G."/>
            <person name="Yang J."/>
            <person name="Qin Z.-Q."/>
            <person name="Miao Y.-G."/>
            <person name="Wang W.-Y."/>
            <person name="Chen R.-S."/>
            <person name="Shen Y."/>
            <person name="Chen Z."/>
            <person name="Yuan Z.-H."/>
            <person name="Zhao G.-P."/>
            <person name="Qu D."/>
            <person name="Danchin A."/>
            <person name="Wen Y.-M."/>
        </authorList>
    </citation>
    <scope>NUCLEOTIDE SEQUENCE [LARGE SCALE GENOMIC DNA]</scope>
    <source>
        <strain>ATCC 12228 / FDA PCI 1200</strain>
    </source>
</reference>